<gene>
    <name evidence="1" type="primary">miaA</name>
    <name type="ordered locus">SEN4127</name>
</gene>
<protein>
    <recommendedName>
        <fullName evidence="1">tRNA dimethylallyltransferase</fullName>
        <ecNumber evidence="1">2.5.1.75</ecNumber>
    </recommendedName>
    <alternativeName>
        <fullName evidence="1">Dimethylallyl diphosphate:tRNA dimethylallyltransferase</fullName>
        <shortName evidence="1">DMAPP:tRNA dimethylallyltransferase</shortName>
        <shortName evidence="1">DMATase</shortName>
    </alternativeName>
    <alternativeName>
        <fullName evidence="1">Isopentenyl-diphosphate:tRNA isopentenyltransferase</fullName>
        <shortName evidence="1">IPP transferase</shortName>
        <shortName evidence="1">IPPT</shortName>
        <shortName evidence="1">IPTase</shortName>
    </alternativeName>
</protein>
<dbReference type="EC" id="2.5.1.75" evidence="1"/>
<dbReference type="EMBL" id="AM933172">
    <property type="protein sequence ID" value="CAR35687.1"/>
    <property type="molecule type" value="Genomic_DNA"/>
</dbReference>
<dbReference type="RefSeq" id="WP_001000736.1">
    <property type="nucleotide sequence ID" value="NC_011294.1"/>
</dbReference>
<dbReference type="SMR" id="B5R0N8"/>
<dbReference type="KEGG" id="set:SEN4127"/>
<dbReference type="HOGENOM" id="CLU_032616_0_0_6"/>
<dbReference type="Proteomes" id="UP000000613">
    <property type="component" value="Chromosome"/>
</dbReference>
<dbReference type="GO" id="GO:0005524">
    <property type="term" value="F:ATP binding"/>
    <property type="evidence" value="ECO:0007669"/>
    <property type="project" value="UniProtKB-UniRule"/>
</dbReference>
<dbReference type="GO" id="GO:0052381">
    <property type="term" value="F:tRNA dimethylallyltransferase activity"/>
    <property type="evidence" value="ECO:0007669"/>
    <property type="project" value="UniProtKB-UniRule"/>
</dbReference>
<dbReference type="GO" id="GO:0006400">
    <property type="term" value="P:tRNA modification"/>
    <property type="evidence" value="ECO:0007669"/>
    <property type="project" value="TreeGrafter"/>
</dbReference>
<dbReference type="FunFam" id="1.10.20.140:FF:000001">
    <property type="entry name" value="tRNA dimethylallyltransferase"/>
    <property type="match status" value="1"/>
</dbReference>
<dbReference type="FunFam" id="1.10.287.890:FF:000001">
    <property type="entry name" value="tRNA dimethylallyltransferase"/>
    <property type="match status" value="1"/>
</dbReference>
<dbReference type="Gene3D" id="1.10.20.140">
    <property type="match status" value="1"/>
</dbReference>
<dbReference type="Gene3D" id="1.10.287.890">
    <property type="entry name" value="Crystal structure of tRNA isopentenylpyrophosphate transferase (bh2366) domain"/>
    <property type="match status" value="1"/>
</dbReference>
<dbReference type="Gene3D" id="3.40.50.300">
    <property type="entry name" value="P-loop containing nucleotide triphosphate hydrolases"/>
    <property type="match status" value="1"/>
</dbReference>
<dbReference type="HAMAP" id="MF_00185">
    <property type="entry name" value="IPP_trans"/>
    <property type="match status" value="1"/>
</dbReference>
<dbReference type="InterPro" id="IPR039657">
    <property type="entry name" value="Dimethylallyltransferase"/>
</dbReference>
<dbReference type="InterPro" id="IPR018022">
    <property type="entry name" value="IPT"/>
</dbReference>
<dbReference type="InterPro" id="IPR027417">
    <property type="entry name" value="P-loop_NTPase"/>
</dbReference>
<dbReference type="NCBIfam" id="TIGR00174">
    <property type="entry name" value="miaA"/>
    <property type="match status" value="1"/>
</dbReference>
<dbReference type="PANTHER" id="PTHR11088">
    <property type="entry name" value="TRNA DIMETHYLALLYLTRANSFERASE"/>
    <property type="match status" value="1"/>
</dbReference>
<dbReference type="PANTHER" id="PTHR11088:SF60">
    <property type="entry name" value="TRNA DIMETHYLALLYLTRANSFERASE"/>
    <property type="match status" value="1"/>
</dbReference>
<dbReference type="Pfam" id="PF01715">
    <property type="entry name" value="IPPT"/>
    <property type="match status" value="1"/>
</dbReference>
<dbReference type="SUPFAM" id="SSF52540">
    <property type="entry name" value="P-loop containing nucleoside triphosphate hydrolases"/>
    <property type="match status" value="1"/>
</dbReference>
<organism>
    <name type="scientific">Salmonella enteritidis PT4 (strain P125109)</name>
    <dbReference type="NCBI Taxonomy" id="550537"/>
    <lineage>
        <taxon>Bacteria</taxon>
        <taxon>Pseudomonadati</taxon>
        <taxon>Pseudomonadota</taxon>
        <taxon>Gammaproteobacteria</taxon>
        <taxon>Enterobacterales</taxon>
        <taxon>Enterobacteriaceae</taxon>
        <taxon>Salmonella</taxon>
    </lineage>
</organism>
<reference key="1">
    <citation type="journal article" date="2008" name="Genome Res.">
        <title>Comparative genome analysis of Salmonella enteritidis PT4 and Salmonella gallinarum 287/91 provides insights into evolutionary and host adaptation pathways.</title>
        <authorList>
            <person name="Thomson N.R."/>
            <person name="Clayton D.J."/>
            <person name="Windhorst D."/>
            <person name="Vernikos G."/>
            <person name="Davidson S."/>
            <person name="Churcher C."/>
            <person name="Quail M.A."/>
            <person name="Stevens M."/>
            <person name="Jones M.A."/>
            <person name="Watson M."/>
            <person name="Barron A."/>
            <person name="Layton A."/>
            <person name="Pickard D."/>
            <person name="Kingsley R.A."/>
            <person name="Bignell A."/>
            <person name="Clark L."/>
            <person name="Harris B."/>
            <person name="Ormond D."/>
            <person name="Abdellah Z."/>
            <person name="Brooks K."/>
            <person name="Cherevach I."/>
            <person name="Chillingworth T."/>
            <person name="Woodward J."/>
            <person name="Norberczak H."/>
            <person name="Lord A."/>
            <person name="Arrowsmith C."/>
            <person name="Jagels K."/>
            <person name="Moule S."/>
            <person name="Mungall K."/>
            <person name="Saunders M."/>
            <person name="Whitehead S."/>
            <person name="Chabalgoity J.A."/>
            <person name="Maskell D."/>
            <person name="Humphreys T."/>
            <person name="Roberts M."/>
            <person name="Barrow P.A."/>
            <person name="Dougan G."/>
            <person name="Parkhill J."/>
        </authorList>
    </citation>
    <scope>NUCLEOTIDE SEQUENCE [LARGE SCALE GENOMIC DNA]</scope>
    <source>
        <strain>P125109</strain>
    </source>
</reference>
<feature type="chain" id="PRO_1000098683" description="tRNA dimethylallyltransferase">
    <location>
        <begin position="1"/>
        <end position="316"/>
    </location>
</feature>
<feature type="region of interest" description="Interaction with substrate tRNA" evidence="1">
    <location>
        <begin position="42"/>
        <end position="45"/>
    </location>
</feature>
<feature type="region of interest" description="Interaction with substrate tRNA" evidence="1">
    <location>
        <begin position="166"/>
        <end position="170"/>
    </location>
</feature>
<feature type="region of interest" description="Interaction with substrate tRNA" evidence="1">
    <location>
        <begin position="247"/>
        <end position="252"/>
    </location>
</feature>
<feature type="binding site" evidence="1">
    <location>
        <begin position="17"/>
        <end position="24"/>
    </location>
    <ligand>
        <name>ATP</name>
        <dbReference type="ChEBI" id="CHEBI:30616"/>
    </ligand>
</feature>
<feature type="binding site" evidence="1">
    <location>
        <begin position="19"/>
        <end position="24"/>
    </location>
    <ligand>
        <name>substrate</name>
    </ligand>
</feature>
<feature type="site" description="Interaction with substrate tRNA" evidence="1">
    <location>
        <position position="108"/>
    </location>
</feature>
<feature type="site" description="Interaction with substrate tRNA" evidence="1">
    <location>
        <position position="130"/>
    </location>
</feature>
<accession>B5R0N8</accession>
<proteinExistence type="inferred from homology"/>
<evidence type="ECO:0000255" key="1">
    <source>
        <dbReference type="HAMAP-Rule" id="MF_00185"/>
    </source>
</evidence>
<name>MIAA_SALEP</name>
<keyword id="KW-0067">ATP-binding</keyword>
<keyword id="KW-0460">Magnesium</keyword>
<keyword id="KW-0547">Nucleotide-binding</keyword>
<keyword id="KW-0808">Transferase</keyword>
<keyword id="KW-0819">tRNA processing</keyword>
<comment type="function">
    <text evidence="1">Catalyzes the transfer of a dimethylallyl group onto the adenine at position 37 in tRNAs that read codons beginning with uridine, leading to the formation of N6-(dimethylallyl)adenosine (i(6)A).</text>
</comment>
<comment type="catalytic activity">
    <reaction evidence="1">
        <text>adenosine(37) in tRNA + dimethylallyl diphosphate = N(6)-dimethylallyladenosine(37) in tRNA + diphosphate</text>
        <dbReference type="Rhea" id="RHEA:26482"/>
        <dbReference type="Rhea" id="RHEA-COMP:10162"/>
        <dbReference type="Rhea" id="RHEA-COMP:10375"/>
        <dbReference type="ChEBI" id="CHEBI:33019"/>
        <dbReference type="ChEBI" id="CHEBI:57623"/>
        <dbReference type="ChEBI" id="CHEBI:74411"/>
        <dbReference type="ChEBI" id="CHEBI:74415"/>
        <dbReference type="EC" id="2.5.1.75"/>
    </reaction>
</comment>
<comment type="cofactor">
    <cofactor evidence="1">
        <name>Mg(2+)</name>
        <dbReference type="ChEBI" id="CHEBI:18420"/>
    </cofactor>
</comment>
<comment type="subunit">
    <text evidence="1">Monomer.</text>
</comment>
<comment type="similarity">
    <text evidence="1">Belongs to the IPP transferase family.</text>
</comment>
<sequence length="316" mass="35186">MNDVSKASLPKAIFLMGPTASGKTALAIELRKVLPVELISVDSALIYRGMDIGTAKPNADELKAAPHRLLDIRDPSQAYSAADFRRDALAQMAEITSAGRIPLLVGGTMLYFKALLEGLSPLPSADPEVRSRIEQQAAELGWEALHQQLQEIDPVAAARIHPNDPQRLSRALEVFFISGKTLTELTQTSGDALPYQVHQFAIAPASRELLHQRIELRFHQMLASGFEAEVRALFARGDLHTDLPSIRCVGYRQMWSYIEGEISYDEMVYRGVCATRQLAKRQMTWLRGWEGVRWLDSENPDRARKEVLQVVGAIAD</sequence>